<protein>
    <recommendedName>
        <fullName evidence="1">Protein RecA</fullName>
    </recommendedName>
    <alternativeName>
        <fullName evidence="1">Recombinase A</fullName>
    </alternativeName>
</protein>
<proteinExistence type="inferred from homology"/>
<dbReference type="EMBL" id="CP001291">
    <property type="protein sequence ID" value="ACK72487.1"/>
    <property type="molecule type" value="Genomic_DNA"/>
</dbReference>
<dbReference type="RefSeq" id="WP_015956072.1">
    <property type="nucleotide sequence ID" value="NC_011729.1"/>
</dbReference>
<dbReference type="SMR" id="B7KLB5"/>
<dbReference type="STRING" id="65393.PCC7424_4116"/>
<dbReference type="KEGG" id="cyc:PCC7424_4116"/>
<dbReference type="eggNOG" id="COG0468">
    <property type="taxonomic scope" value="Bacteria"/>
</dbReference>
<dbReference type="HOGENOM" id="CLU_040469_3_2_3"/>
<dbReference type="OrthoDB" id="9776733at2"/>
<dbReference type="Proteomes" id="UP000002384">
    <property type="component" value="Chromosome"/>
</dbReference>
<dbReference type="GO" id="GO:0005829">
    <property type="term" value="C:cytosol"/>
    <property type="evidence" value="ECO:0007669"/>
    <property type="project" value="TreeGrafter"/>
</dbReference>
<dbReference type="GO" id="GO:0005524">
    <property type="term" value="F:ATP binding"/>
    <property type="evidence" value="ECO:0007669"/>
    <property type="project" value="UniProtKB-UniRule"/>
</dbReference>
<dbReference type="GO" id="GO:0016887">
    <property type="term" value="F:ATP hydrolysis activity"/>
    <property type="evidence" value="ECO:0007669"/>
    <property type="project" value="InterPro"/>
</dbReference>
<dbReference type="GO" id="GO:0140664">
    <property type="term" value="F:ATP-dependent DNA damage sensor activity"/>
    <property type="evidence" value="ECO:0007669"/>
    <property type="project" value="InterPro"/>
</dbReference>
<dbReference type="GO" id="GO:0003684">
    <property type="term" value="F:damaged DNA binding"/>
    <property type="evidence" value="ECO:0007669"/>
    <property type="project" value="UniProtKB-UniRule"/>
</dbReference>
<dbReference type="GO" id="GO:0003697">
    <property type="term" value="F:single-stranded DNA binding"/>
    <property type="evidence" value="ECO:0007669"/>
    <property type="project" value="UniProtKB-UniRule"/>
</dbReference>
<dbReference type="GO" id="GO:0006310">
    <property type="term" value="P:DNA recombination"/>
    <property type="evidence" value="ECO:0007669"/>
    <property type="project" value="UniProtKB-UniRule"/>
</dbReference>
<dbReference type="GO" id="GO:0006281">
    <property type="term" value="P:DNA repair"/>
    <property type="evidence" value="ECO:0007669"/>
    <property type="project" value="UniProtKB-UniRule"/>
</dbReference>
<dbReference type="GO" id="GO:0009432">
    <property type="term" value="P:SOS response"/>
    <property type="evidence" value="ECO:0007669"/>
    <property type="project" value="UniProtKB-UniRule"/>
</dbReference>
<dbReference type="CDD" id="cd00983">
    <property type="entry name" value="RecA"/>
    <property type="match status" value="1"/>
</dbReference>
<dbReference type="FunFam" id="3.40.50.300:FF:000087">
    <property type="entry name" value="Recombinase RecA"/>
    <property type="match status" value="1"/>
</dbReference>
<dbReference type="Gene3D" id="3.40.50.300">
    <property type="entry name" value="P-loop containing nucleotide triphosphate hydrolases"/>
    <property type="match status" value="1"/>
</dbReference>
<dbReference type="HAMAP" id="MF_00268">
    <property type="entry name" value="RecA"/>
    <property type="match status" value="1"/>
</dbReference>
<dbReference type="InterPro" id="IPR003593">
    <property type="entry name" value="AAA+_ATPase"/>
</dbReference>
<dbReference type="InterPro" id="IPR013765">
    <property type="entry name" value="DNA_recomb/repair_RecA"/>
</dbReference>
<dbReference type="InterPro" id="IPR020584">
    <property type="entry name" value="DNA_recomb/repair_RecA_CS"/>
</dbReference>
<dbReference type="InterPro" id="IPR027417">
    <property type="entry name" value="P-loop_NTPase"/>
</dbReference>
<dbReference type="InterPro" id="IPR049261">
    <property type="entry name" value="RecA-like_C"/>
</dbReference>
<dbReference type="InterPro" id="IPR049428">
    <property type="entry name" value="RecA-like_N"/>
</dbReference>
<dbReference type="InterPro" id="IPR020588">
    <property type="entry name" value="RecA_ATP-bd"/>
</dbReference>
<dbReference type="InterPro" id="IPR023400">
    <property type="entry name" value="RecA_C_sf"/>
</dbReference>
<dbReference type="InterPro" id="IPR020587">
    <property type="entry name" value="RecA_monomer-monomer_interface"/>
</dbReference>
<dbReference type="NCBIfam" id="TIGR02012">
    <property type="entry name" value="tigrfam_recA"/>
    <property type="match status" value="1"/>
</dbReference>
<dbReference type="PANTHER" id="PTHR45900:SF1">
    <property type="entry name" value="MITOCHONDRIAL DNA REPAIR PROTEIN RECA HOMOLOG-RELATED"/>
    <property type="match status" value="1"/>
</dbReference>
<dbReference type="PANTHER" id="PTHR45900">
    <property type="entry name" value="RECA"/>
    <property type="match status" value="1"/>
</dbReference>
<dbReference type="Pfam" id="PF00154">
    <property type="entry name" value="RecA"/>
    <property type="match status" value="1"/>
</dbReference>
<dbReference type="Pfam" id="PF21096">
    <property type="entry name" value="RecA_C"/>
    <property type="match status" value="1"/>
</dbReference>
<dbReference type="PRINTS" id="PR00142">
    <property type="entry name" value="RECA"/>
</dbReference>
<dbReference type="SMART" id="SM00382">
    <property type="entry name" value="AAA"/>
    <property type="match status" value="1"/>
</dbReference>
<dbReference type="SUPFAM" id="SSF52540">
    <property type="entry name" value="P-loop containing nucleoside triphosphate hydrolases"/>
    <property type="match status" value="1"/>
</dbReference>
<dbReference type="SUPFAM" id="SSF54752">
    <property type="entry name" value="RecA protein, C-terminal domain"/>
    <property type="match status" value="1"/>
</dbReference>
<dbReference type="PROSITE" id="PS00321">
    <property type="entry name" value="RECA_1"/>
    <property type="match status" value="1"/>
</dbReference>
<dbReference type="PROSITE" id="PS50162">
    <property type="entry name" value="RECA_2"/>
    <property type="match status" value="1"/>
</dbReference>
<dbReference type="PROSITE" id="PS50163">
    <property type="entry name" value="RECA_3"/>
    <property type="match status" value="1"/>
</dbReference>
<evidence type="ECO:0000255" key="1">
    <source>
        <dbReference type="HAMAP-Rule" id="MF_00268"/>
    </source>
</evidence>
<reference key="1">
    <citation type="journal article" date="2011" name="MBio">
        <title>Novel metabolic attributes of the genus Cyanothece, comprising a group of unicellular nitrogen-fixing Cyanobacteria.</title>
        <authorList>
            <person name="Bandyopadhyay A."/>
            <person name="Elvitigala T."/>
            <person name="Welsh E."/>
            <person name="Stockel J."/>
            <person name="Liberton M."/>
            <person name="Min H."/>
            <person name="Sherman L.A."/>
            <person name="Pakrasi H.B."/>
        </authorList>
    </citation>
    <scope>NUCLEOTIDE SEQUENCE [LARGE SCALE GENOMIC DNA]</scope>
    <source>
        <strain>PCC 7424</strain>
    </source>
</reference>
<feature type="chain" id="PRO_1000193301" description="Protein RecA">
    <location>
        <begin position="1"/>
        <end position="356"/>
    </location>
</feature>
<feature type="binding site" evidence="1">
    <location>
        <begin position="69"/>
        <end position="76"/>
    </location>
    <ligand>
        <name>ATP</name>
        <dbReference type="ChEBI" id="CHEBI:30616"/>
    </ligand>
</feature>
<keyword id="KW-0067">ATP-binding</keyword>
<keyword id="KW-0963">Cytoplasm</keyword>
<keyword id="KW-0227">DNA damage</keyword>
<keyword id="KW-0233">DNA recombination</keyword>
<keyword id="KW-0234">DNA repair</keyword>
<keyword id="KW-0238">DNA-binding</keyword>
<keyword id="KW-0547">Nucleotide-binding</keyword>
<keyword id="KW-1185">Reference proteome</keyword>
<keyword id="KW-0742">SOS response</keyword>
<accession>B7KLB5</accession>
<sequence>MATITNNPDKEKALNLVLNQIERSFGKGSIMRLGDAARMRVETIPSGALTLDLALGGGLPKGRVIEIYGPESSGKTTLALHAIAEVQKAGGVAAFVDAEHALDPTYSEVLGVDIHNLLVAQPDTGESALEIVDQLVRSAAVDIVVVDSVAALVPRAEIEGEMGDNQVGLQARLMSKALRKIAGNIGKSGCVVIFLNQLRQKIGVTYGSPEVTTGGTALKFYASVRLDIRRIQTLKKGSEGEYGIRAKVKVAKNKVAPPFRIAEFDIIFGKGISQMGCMIDMAEHTDVITRKGAWYSYNGENIAQGRDNAVKYLEENLDVAAIIEKQVREKLDIASLSFAGSGNDDEEEFEAVEAEE</sequence>
<name>RECA_GLOC7</name>
<organism>
    <name type="scientific">Gloeothece citriformis (strain PCC 7424)</name>
    <name type="common">Cyanothece sp. (strain PCC 7424)</name>
    <dbReference type="NCBI Taxonomy" id="65393"/>
    <lineage>
        <taxon>Bacteria</taxon>
        <taxon>Bacillati</taxon>
        <taxon>Cyanobacteriota</taxon>
        <taxon>Cyanophyceae</taxon>
        <taxon>Oscillatoriophycideae</taxon>
        <taxon>Chroococcales</taxon>
        <taxon>Aphanothecaceae</taxon>
        <taxon>Gloeothece</taxon>
        <taxon>Gloeothece citriformis</taxon>
    </lineage>
</organism>
<gene>
    <name evidence="1" type="primary">recA</name>
    <name type="ordered locus">PCC7424_4116</name>
</gene>
<comment type="function">
    <text evidence="1">Can catalyze the hydrolysis of ATP in the presence of single-stranded DNA, the ATP-dependent uptake of single-stranded DNA by duplex DNA, and the ATP-dependent hybridization of homologous single-stranded DNAs. It interacts with LexA causing its activation and leading to its autocatalytic cleavage.</text>
</comment>
<comment type="subcellular location">
    <subcellularLocation>
        <location evidence="1">Cytoplasm</location>
    </subcellularLocation>
</comment>
<comment type="similarity">
    <text evidence="1">Belongs to the RecA family.</text>
</comment>